<feature type="chain" id="PRO_0000137689" description="Small ribosomal subunit protein eS31">
    <location>
        <begin position="1"/>
        <end position="63"/>
    </location>
</feature>
<feature type="binding site" evidence="1">
    <location>
        <position position="31"/>
    </location>
    <ligand>
        <name>Zn(2+)</name>
        <dbReference type="ChEBI" id="CHEBI:29105"/>
    </ligand>
</feature>
<feature type="binding site" evidence="1">
    <location>
        <position position="34"/>
    </location>
    <ligand>
        <name>Zn(2+)</name>
        <dbReference type="ChEBI" id="CHEBI:29105"/>
    </ligand>
</feature>
<feature type="binding site" evidence="1">
    <location>
        <position position="50"/>
    </location>
    <ligand>
        <name>Zn(2+)</name>
        <dbReference type="ChEBI" id="CHEBI:29105"/>
    </ligand>
</feature>
<feature type="binding site" evidence="1">
    <location>
        <position position="53"/>
    </location>
    <ligand>
        <name>Zn(2+)</name>
        <dbReference type="ChEBI" id="CHEBI:29105"/>
    </ligand>
</feature>
<reference key="1">
    <citation type="journal article" date="1999" name="DNA Res.">
        <title>Complete genome sequence of an aerobic hyper-thermophilic crenarchaeon, Aeropyrum pernix K1.</title>
        <authorList>
            <person name="Kawarabayasi Y."/>
            <person name="Hino Y."/>
            <person name="Horikawa H."/>
            <person name="Yamazaki S."/>
            <person name="Haikawa Y."/>
            <person name="Jin-no K."/>
            <person name="Takahashi M."/>
            <person name="Sekine M."/>
            <person name="Baba S."/>
            <person name="Ankai A."/>
            <person name="Kosugi H."/>
            <person name="Hosoyama A."/>
            <person name="Fukui S."/>
            <person name="Nagai Y."/>
            <person name="Nishijima K."/>
            <person name="Nakazawa H."/>
            <person name="Takamiya M."/>
            <person name="Masuda S."/>
            <person name="Funahashi T."/>
            <person name="Tanaka T."/>
            <person name="Kudoh Y."/>
            <person name="Yamazaki J."/>
            <person name="Kushida N."/>
            <person name="Oguchi A."/>
            <person name="Aoki K."/>
            <person name="Kubota K."/>
            <person name="Nakamura Y."/>
            <person name="Nomura N."/>
            <person name="Sako Y."/>
            <person name="Kikuchi H."/>
        </authorList>
    </citation>
    <scope>NUCLEOTIDE SEQUENCE [LARGE SCALE GENOMIC DNA]</scope>
    <source>
        <strain>ATCC 700893 / DSM 11879 / JCM 9820 / NBRC 100138 / K1</strain>
    </source>
</reference>
<proteinExistence type="inferred from homology"/>
<comment type="cofactor">
    <cofactor evidence="1">
        <name>Zn(2+)</name>
        <dbReference type="ChEBI" id="CHEBI:29105"/>
    </cofactor>
    <text evidence="1">Binds 1 zinc ion per subunit.</text>
</comment>
<comment type="subunit">
    <text evidence="1">Part of the 30S ribosomal subunit.</text>
</comment>
<comment type="similarity">
    <text evidence="2">Belongs to the eukaryotic ribosomal protein eS31 family.</text>
</comment>
<organism>
    <name type="scientific">Aeropyrum pernix (strain ATCC 700893 / DSM 11879 / JCM 9820 / NBRC 100138 / K1)</name>
    <dbReference type="NCBI Taxonomy" id="272557"/>
    <lineage>
        <taxon>Archaea</taxon>
        <taxon>Thermoproteota</taxon>
        <taxon>Thermoprotei</taxon>
        <taxon>Desulfurococcales</taxon>
        <taxon>Desulfurococcaceae</taxon>
        <taxon>Aeropyrum</taxon>
    </lineage>
</organism>
<accession>P61297</accession>
<accession>Q05E28</accession>
<protein>
    <recommendedName>
        <fullName evidence="2">Small ribosomal subunit protein eS31</fullName>
    </recommendedName>
    <alternativeName>
        <fullName>30S ribosomal protein S27ae</fullName>
    </alternativeName>
</protein>
<name>RS27A_AERPE</name>
<evidence type="ECO:0000250" key="1"/>
<evidence type="ECO:0000305" key="2"/>
<keyword id="KW-0479">Metal-binding</keyword>
<keyword id="KW-1185">Reference proteome</keyword>
<keyword id="KW-0687">Ribonucleoprotein</keyword>
<keyword id="KW-0689">Ribosomal protein</keyword>
<keyword id="KW-0862">Zinc</keyword>
<keyword id="KW-0863">Zinc-finger</keyword>
<dbReference type="EMBL" id="BA000002">
    <property type="protein sequence ID" value="BAF34773.1"/>
    <property type="molecule type" value="Genomic_DNA"/>
</dbReference>
<dbReference type="RefSeq" id="WP_010866184.1">
    <property type="nucleotide sequence ID" value="NC_000854.2"/>
</dbReference>
<dbReference type="SMR" id="P61297"/>
<dbReference type="STRING" id="272557.APE_1132a"/>
<dbReference type="EnsemblBacteria" id="BAF34773">
    <property type="protein sequence ID" value="BAF34773"/>
    <property type="gene ID" value="APE_1132a"/>
</dbReference>
<dbReference type="GeneID" id="1445558"/>
<dbReference type="KEGG" id="ape:APE_1132a"/>
<dbReference type="PATRIC" id="fig|272557.25.peg.783"/>
<dbReference type="eggNOG" id="arCOG04183">
    <property type="taxonomic scope" value="Archaea"/>
</dbReference>
<dbReference type="Proteomes" id="UP000002518">
    <property type="component" value="Chromosome"/>
</dbReference>
<dbReference type="GO" id="GO:1990904">
    <property type="term" value="C:ribonucleoprotein complex"/>
    <property type="evidence" value="ECO:0007669"/>
    <property type="project" value="UniProtKB-KW"/>
</dbReference>
<dbReference type="GO" id="GO:0005840">
    <property type="term" value="C:ribosome"/>
    <property type="evidence" value="ECO:0007669"/>
    <property type="project" value="UniProtKB-KW"/>
</dbReference>
<dbReference type="GO" id="GO:0003735">
    <property type="term" value="F:structural constituent of ribosome"/>
    <property type="evidence" value="ECO:0007669"/>
    <property type="project" value="InterPro"/>
</dbReference>
<dbReference type="GO" id="GO:0008270">
    <property type="term" value="F:zinc ion binding"/>
    <property type="evidence" value="ECO:0007669"/>
    <property type="project" value="UniProtKB-UniRule"/>
</dbReference>
<dbReference type="GO" id="GO:0006412">
    <property type="term" value="P:translation"/>
    <property type="evidence" value="ECO:0007669"/>
    <property type="project" value="UniProtKB-UniRule"/>
</dbReference>
<dbReference type="Gene3D" id="6.20.50.180">
    <property type="match status" value="1"/>
</dbReference>
<dbReference type="HAMAP" id="MF_00777">
    <property type="entry name" value="Ribosomal_eS31"/>
    <property type="match status" value="1"/>
</dbReference>
<dbReference type="InterPro" id="IPR002906">
    <property type="entry name" value="Ribosomal_eS31"/>
</dbReference>
<dbReference type="InterPro" id="IPR022845">
    <property type="entry name" value="Ribosomal_eS31_arc"/>
</dbReference>
<dbReference type="InterPro" id="IPR011332">
    <property type="entry name" value="Ribosomal_zn-bd"/>
</dbReference>
<dbReference type="NCBIfam" id="NF001669">
    <property type="entry name" value="PRK00432.1"/>
    <property type="match status" value="1"/>
</dbReference>
<dbReference type="Pfam" id="PF01599">
    <property type="entry name" value="Ribosomal_S27"/>
    <property type="match status" value="1"/>
</dbReference>
<dbReference type="SMART" id="SM01402">
    <property type="entry name" value="Ribosomal_S27"/>
    <property type="match status" value="1"/>
</dbReference>
<dbReference type="SUPFAM" id="SSF57829">
    <property type="entry name" value="Zn-binding ribosomal proteins"/>
    <property type="match status" value="1"/>
</dbReference>
<gene>
    <name type="primary">rps27ae</name>
    <name type="ordered locus">APE_1132a</name>
</gene>
<sequence>MAEKKELKTYVHKLYEVDYEKGVIKLKNRRCPRCGSIMAHHMKPVERWHCGKCGYTEFVTKKK</sequence>